<proteinExistence type="inferred from homology"/>
<name>PANB_HELHP</name>
<sequence length="264" mass="28770">MLDKKMSIATLKAKKGIEKITAITAYDALMARIFDGEVDVILVGDSLKMSFGGENETLGASMQEMIYHTKAVCKGAKHSFIIADMPFGSYATPNMALKNALRFYKNTAADALKLEVGIDKLPVVKVLCEEGIAVMAHIGLKPQFMRFDGGFKIKGKDEVESQELIEAAVAFQEAGVFGILIEGVKSESGARITQALEIPTIGIGAGVECDGQILVWSDAFGFFDEFKPKFVRRYCDGKAILKDAIRAYAKDVKSQAFPQAQESY</sequence>
<reference key="1">
    <citation type="journal article" date="2003" name="Proc. Natl. Acad. Sci. U.S.A.">
        <title>The complete genome sequence of the carcinogenic bacterium Helicobacter hepaticus.</title>
        <authorList>
            <person name="Suerbaum S."/>
            <person name="Josenhans C."/>
            <person name="Sterzenbach T."/>
            <person name="Drescher B."/>
            <person name="Brandt P."/>
            <person name="Bell M."/>
            <person name="Droege M."/>
            <person name="Fartmann B."/>
            <person name="Fischer H.-P."/>
            <person name="Ge Z."/>
            <person name="Hoerster A."/>
            <person name="Holland R."/>
            <person name="Klein K."/>
            <person name="Koenig J."/>
            <person name="Macko L."/>
            <person name="Mendz G.L."/>
            <person name="Nyakatura G."/>
            <person name="Schauer D.B."/>
            <person name="Shen Z."/>
            <person name="Weber J."/>
            <person name="Frosch M."/>
            <person name="Fox J.G."/>
        </authorList>
    </citation>
    <scope>NUCLEOTIDE SEQUENCE [LARGE SCALE GENOMIC DNA]</scope>
    <source>
        <strain>ATCC 51449 / 3B1</strain>
    </source>
</reference>
<accession>Q7VIU7</accession>
<dbReference type="EC" id="2.1.2.11" evidence="1"/>
<dbReference type="EMBL" id="AE017125">
    <property type="protein sequence ID" value="AAP77104.1"/>
    <property type="molecule type" value="Genomic_DNA"/>
</dbReference>
<dbReference type="RefSeq" id="WP_011115349.1">
    <property type="nucleotide sequence ID" value="NC_004917.1"/>
</dbReference>
<dbReference type="SMR" id="Q7VIU7"/>
<dbReference type="STRING" id="235279.HH_0507"/>
<dbReference type="KEGG" id="hhe:HH_0507"/>
<dbReference type="eggNOG" id="COG0413">
    <property type="taxonomic scope" value="Bacteria"/>
</dbReference>
<dbReference type="HOGENOM" id="CLU_036645_1_0_7"/>
<dbReference type="OrthoDB" id="9781789at2"/>
<dbReference type="UniPathway" id="UPA00028">
    <property type="reaction ID" value="UER00003"/>
</dbReference>
<dbReference type="Proteomes" id="UP000002495">
    <property type="component" value="Chromosome"/>
</dbReference>
<dbReference type="GO" id="GO:0005737">
    <property type="term" value="C:cytoplasm"/>
    <property type="evidence" value="ECO:0007669"/>
    <property type="project" value="UniProtKB-SubCell"/>
</dbReference>
<dbReference type="GO" id="GO:0003864">
    <property type="term" value="F:3-methyl-2-oxobutanoate hydroxymethyltransferase activity"/>
    <property type="evidence" value="ECO:0007669"/>
    <property type="project" value="UniProtKB-UniRule"/>
</dbReference>
<dbReference type="GO" id="GO:0000287">
    <property type="term" value="F:magnesium ion binding"/>
    <property type="evidence" value="ECO:0007669"/>
    <property type="project" value="TreeGrafter"/>
</dbReference>
<dbReference type="GO" id="GO:0015940">
    <property type="term" value="P:pantothenate biosynthetic process"/>
    <property type="evidence" value="ECO:0007669"/>
    <property type="project" value="UniProtKB-UniRule"/>
</dbReference>
<dbReference type="CDD" id="cd06557">
    <property type="entry name" value="KPHMT-like"/>
    <property type="match status" value="1"/>
</dbReference>
<dbReference type="FunFam" id="3.20.20.60:FF:000003">
    <property type="entry name" value="3-methyl-2-oxobutanoate hydroxymethyltransferase"/>
    <property type="match status" value="1"/>
</dbReference>
<dbReference type="Gene3D" id="3.20.20.60">
    <property type="entry name" value="Phosphoenolpyruvate-binding domains"/>
    <property type="match status" value="1"/>
</dbReference>
<dbReference type="HAMAP" id="MF_00156">
    <property type="entry name" value="PanB"/>
    <property type="match status" value="1"/>
</dbReference>
<dbReference type="InterPro" id="IPR003700">
    <property type="entry name" value="Pantoate_hydroxy_MeTrfase"/>
</dbReference>
<dbReference type="InterPro" id="IPR015813">
    <property type="entry name" value="Pyrv/PenolPyrv_kinase-like_dom"/>
</dbReference>
<dbReference type="InterPro" id="IPR040442">
    <property type="entry name" value="Pyrv_kinase-like_dom_sf"/>
</dbReference>
<dbReference type="NCBIfam" id="TIGR00222">
    <property type="entry name" value="panB"/>
    <property type="match status" value="1"/>
</dbReference>
<dbReference type="NCBIfam" id="NF001452">
    <property type="entry name" value="PRK00311.1"/>
    <property type="match status" value="1"/>
</dbReference>
<dbReference type="PANTHER" id="PTHR20881">
    <property type="entry name" value="3-METHYL-2-OXOBUTANOATE HYDROXYMETHYLTRANSFERASE"/>
    <property type="match status" value="1"/>
</dbReference>
<dbReference type="PANTHER" id="PTHR20881:SF0">
    <property type="entry name" value="3-METHYL-2-OXOBUTANOATE HYDROXYMETHYLTRANSFERASE"/>
    <property type="match status" value="1"/>
</dbReference>
<dbReference type="Pfam" id="PF02548">
    <property type="entry name" value="Pantoate_transf"/>
    <property type="match status" value="1"/>
</dbReference>
<dbReference type="PIRSF" id="PIRSF000388">
    <property type="entry name" value="Pantoate_hydroxy_MeTrfase"/>
    <property type="match status" value="1"/>
</dbReference>
<dbReference type="SUPFAM" id="SSF51621">
    <property type="entry name" value="Phosphoenolpyruvate/pyruvate domain"/>
    <property type="match status" value="1"/>
</dbReference>
<keyword id="KW-0963">Cytoplasm</keyword>
<keyword id="KW-0460">Magnesium</keyword>
<keyword id="KW-0479">Metal-binding</keyword>
<keyword id="KW-0566">Pantothenate biosynthesis</keyword>
<keyword id="KW-1185">Reference proteome</keyword>
<keyword id="KW-0808">Transferase</keyword>
<gene>
    <name evidence="1" type="primary">panB</name>
    <name type="ordered locus">HH_0507</name>
</gene>
<comment type="function">
    <text evidence="1">Catalyzes the reversible reaction in which hydroxymethyl group from 5,10-methylenetetrahydrofolate is transferred onto alpha-ketoisovalerate to form ketopantoate.</text>
</comment>
<comment type="catalytic activity">
    <reaction evidence="1">
        <text>3-methyl-2-oxobutanoate + (6R)-5,10-methylene-5,6,7,8-tetrahydrofolate + H2O = 2-dehydropantoate + (6S)-5,6,7,8-tetrahydrofolate</text>
        <dbReference type="Rhea" id="RHEA:11824"/>
        <dbReference type="ChEBI" id="CHEBI:11561"/>
        <dbReference type="ChEBI" id="CHEBI:11851"/>
        <dbReference type="ChEBI" id="CHEBI:15377"/>
        <dbReference type="ChEBI" id="CHEBI:15636"/>
        <dbReference type="ChEBI" id="CHEBI:57453"/>
        <dbReference type="EC" id="2.1.2.11"/>
    </reaction>
</comment>
<comment type="cofactor">
    <cofactor evidence="1">
        <name>Mg(2+)</name>
        <dbReference type="ChEBI" id="CHEBI:18420"/>
    </cofactor>
    <text evidence="1">Binds 1 Mg(2+) ion per subunit.</text>
</comment>
<comment type="pathway">
    <text evidence="1">Cofactor biosynthesis; (R)-pantothenate biosynthesis; (R)-pantoate from 3-methyl-2-oxobutanoate: step 1/2.</text>
</comment>
<comment type="subunit">
    <text evidence="1">Homodecamer; pentamer of dimers.</text>
</comment>
<comment type="subcellular location">
    <subcellularLocation>
        <location evidence="1">Cytoplasm</location>
    </subcellularLocation>
</comment>
<comment type="similarity">
    <text evidence="1">Belongs to the PanB family.</text>
</comment>
<feature type="chain" id="PRO_0000297282" description="3-methyl-2-oxobutanoate hydroxymethyltransferase">
    <location>
        <begin position="1"/>
        <end position="264"/>
    </location>
</feature>
<feature type="active site" description="Proton acceptor" evidence="1">
    <location>
        <position position="182"/>
    </location>
</feature>
<feature type="binding site" evidence="1">
    <location>
        <begin position="45"/>
        <end position="46"/>
    </location>
    <ligand>
        <name>3-methyl-2-oxobutanoate</name>
        <dbReference type="ChEBI" id="CHEBI:11851"/>
    </ligand>
</feature>
<feature type="binding site" evidence="1">
    <location>
        <position position="45"/>
    </location>
    <ligand>
        <name>Mg(2+)</name>
        <dbReference type="ChEBI" id="CHEBI:18420"/>
    </ligand>
</feature>
<feature type="binding site" evidence="1">
    <location>
        <position position="84"/>
    </location>
    <ligand>
        <name>3-methyl-2-oxobutanoate</name>
        <dbReference type="ChEBI" id="CHEBI:11851"/>
    </ligand>
</feature>
<feature type="binding site" evidence="1">
    <location>
        <position position="84"/>
    </location>
    <ligand>
        <name>Mg(2+)</name>
        <dbReference type="ChEBI" id="CHEBI:18420"/>
    </ligand>
</feature>
<feature type="binding site" evidence="1">
    <location>
        <position position="113"/>
    </location>
    <ligand>
        <name>3-methyl-2-oxobutanoate</name>
        <dbReference type="ChEBI" id="CHEBI:11851"/>
    </ligand>
</feature>
<feature type="binding site" evidence="1">
    <location>
        <position position="115"/>
    </location>
    <ligand>
        <name>Mg(2+)</name>
        <dbReference type="ChEBI" id="CHEBI:18420"/>
    </ligand>
</feature>
<protein>
    <recommendedName>
        <fullName evidence="1">3-methyl-2-oxobutanoate hydroxymethyltransferase</fullName>
        <ecNumber evidence="1">2.1.2.11</ecNumber>
    </recommendedName>
    <alternativeName>
        <fullName evidence="1">Ketopantoate hydroxymethyltransferase</fullName>
        <shortName evidence="1">KPHMT</shortName>
    </alternativeName>
</protein>
<evidence type="ECO:0000255" key="1">
    <source>
        <dbReference type="HAMAP-Rule" id="MF_00156"/>
    </source>
</evidence>
<organism>
    <name type="scientific">Helicobacter hepaticus (strain ATCC 51449 / 3B1)</name>
    <dbReference type="NCBI Taxonomy" id="235279"/>
    <lineage>
        <taxon>Bacteria</taxon>
        <taxon>Pseudomonadati</taxon>
        <taxon>Campylobacterota</taxon>
        <taxon>Epsilonproteobacteria</taxon>
        <taxon>Campylobacterales</taxon>
        <taxon>Helicobacteraceae</taxon>
        <taxon>Helicobacter</taxon>
    </lineage>
</organism>